<accession>P54855</accession>
<accession>A6NDX0</accession>
<accession>A6NNJ4</accession>
<accession>A8K054</accession>
<accession>P23765</accession>
<accession>Q9UK63</accession>
<keyword id="KW-0002">3D-structure</keyword>
<keyword id="KW-0903">Direct protein sequencing</keyword>
<keyword id="KW-0256">Endoplasmic reticulum</keyword>
<keyword id="KW-0325">Glycoprotein</keyword>
<keyword id="KW-0328">Glycosyltransferase</keyword>
<keyword id="KW-0443">Lipid metabolism</keyword>
<keyword id="KW-0472">Membrane</keyword>
<keyword id="KW-1267">Proteomics identification</keyword>
<keyword id="KW-1185">Reference proteome</keyword>
<keyword id="KW-0732">Signal</keyword>
<keyword id="KW-0753">Steroid metabolism</keyword>
<keyword id="KW-0808">Transferase</keyword>
<keyword id="KW-0812">Transmembrane</keyword>
<keyword id="KW-1133">Transmembrane helix</keyword>
<name>UDB15_HUMAN</name>
<sequence length="530" mass="61036">MSLKWTSVFLLIQLSCYFSSGSCGKVLVWPTEYSHWINMKTILEELVQRGHEVTVLTSSASTLVNASKSSAIKLEVYPTSLTKNYLEDSLLKILDRWIYGVSKNTFWSYFSQLQELCWEYYDYSNKLCKDAVLNKKLMMKLQESKFDVILADALNPCGELLAELFNIPFLYSLRFSVGYTFEKNGGGFLFPPSYVPVVMSELSDQMIFMERIKNMIHMLYFDFWFQIYDLKKWDQFYSEVLGRPTTLFETMGKAEMWLIRTYWDFEFPRPFLPNVDFVGGLHCKPAKPLPKEMEEFVQSSGENGIVVFSLGSMISNMSEESANMIASALAQIPQKVLWRFDGKKPNTLGSNTRLYKWLPQNDLLGHPKTKAFITHGGTNGIYEAIYHGIPMVGIPLFADQHDNIAHMKAKGAALSVDIRTMSSRDLLNALKSVINDPVYKENVMKLSRIHHDQPMKPLDRAVFWIEFVMRHKGAKHLRVAAHNLTWIQYHSLDVIAFLLACVATVIFIITKFCLFCFRKLAKKGKKKKRD</sequence>
<dbReference type="EC" id="2.4.1.17" evidence="6 7 9 10 12"/>
<dbReference type="EMBL" id="AF548389">
    <property type="protein sequence ID" value="AAN40695.1"/>
    <property type="molecule type" value="mRNA"/>
</dbReference>
<dbReference type="EMBL" id="U08854">
    <property type="protein sequence ID" value="AAC50077.1"/>
    <property type="molecule type" value="mRNA"/>
</dbReference>
<dbReference type="EMBL" id="AF180322">
    <property type="protein sequence ID" value="AAD55093.1"/>
    <property type="molecule type" value="mRNA"/>
</dbReference>
<dbReference type="EMBL" id="AK289419">
    <property type="protein sequence ID" value="BAF82108.1"/>
    <property type="molecule type" value="mRNA"/>
</dbReference>
<dbReference type="EMBL" id="AC019173">
    <property type="status" value="NOT_ANNOTATED_CDS"/>
    <property type="molecule type" value="Genomic_DNA"/>
</dbReference>
<dbReference type="EMBL" id="AC147055">
    <property type="status" value="NOT_ANNOTATED_CDS"/>
    <property type="molecule type" value="Genomic_DNA"/>
</dbReference>
<dbReference type="EMBL" id="CH471057">
    <property type="protein sequence ID" value="EAX05574.1"/>
    <property type="molecule type" value="Genomic_DNA"/>
</dbReference>
<dbReference type="EMBL" id="U06641">
    <property type="protein sequence ID" value="AAA83406.1"/>
    <property type="molecule type" value="mRNA"/>
</dbReference>
<dbReference type="CCDS" id="CCDS3524.1"/>
<dbReference type="PIR" id="A48633">
    <property type="entry name" value="A48633"/>
</dbReference>
<dbReference type="PIR" id="S11309">
    <property type="entry name" value="S11309"/>
</dbReference>
<dbReference type="RefSeq" id="NP_001067.2">
    <property type="nucleotide sequence ID" value="NM_001076.4"/>
</dbReference>
<dbReference type="PDB" id="6IPB">
    <property type="method" value="X-ray"/>
    <property type="resolution" value="1.78 A"/>
    <property type="chains" value="A/B/C/D=284-451"/>
</dbReference>
<dbReference type="PDB" id="7CJX">
    <property type="method" value="X-ray"/>
    <property type="resolution" value="1.99 A"/>
    <property type="chains" value="A/B/C/D=284-447"/>
</dbReference>
<dbReference type="PDBsum" id="6IPB"/>
<dbReference type="PDBsum" id="7CJX"/>
<dbReference type="SMR" id="P54855"/>
<dbReference type="BioGRID" id="113213">
    <property type="interactions" value="5"/>
</dbReference>
<dbReference type="FunCoup" id="P54855">
    <property type="interactions" value="364"/>
</dbReference>
<dbReference type="IntAct" id="P54855">
    <property type="interactions" value="3"/>
</dbReference>
<dbReference type="STRING" id="9606.ENSP00000341045"/>
<dbReference type="BindingDB" id="P54855"/>
<dbReference type="ChEMBL" id="CHEMBL6161"/>
<dbReference type="DrugBank" id="DB00316">
    <property type="generic name" value="Acetaminophen"/>
</dbReference>
<dbReference type="DrugBank" id="DB00714">
    <property type="generic name" value="Apomorphine"/>
</dbReference>
<dbReference type="DrugBank" id="DB14635">
    <property type="generic name" value="Curcumin sulfate"/>
</dbReference>
<dbReference type="DrugBank" id="DB06695">
    <property type="generic name" value="Dabigatran etexilate"/>
</dbReference>
<dbReference type="DrugBank" id="DB11943">
    <property type="generic name" value="Delafloxacin"/>
</dbReference>
<dbReference type="DrugBank" id="DB06700">
    <property type="generic name" value="Desvenlafaxine"/>
</dbReference>
<dbReference type="DrugBank" id="DB00514">
    <property type="generic name" value="Dextromethorphan"/>
</dbReference>
<dbReference type="DrugBank" id="DB11979">
    <property type="generic name" value="Elagolix"/>
</dbReference>
<dbReference type="DrugBank" id="DB13874">
    <property type="generic name" value="Enasidenib"/>
</dbReference>
<dbReference type="DrugBank" id="DB00783">
    <property type="generic name" value="Estradiol"/>
</dbReference>
<dbReference type="DrugBank" id="DB00973">
    <property type="generic name" value="Ezetimibe"/>
</dbReference>
<dbReference type="DrugBank" id="DB00983">
    <property type="generic name" value="Formoterol"/>
</dbReference>
<dbReference type="DrugBank" id="DB11796">
    <property type="generic name" value="Fostemsavir"/>
</dbReference>
<dbReference type="DrugBank" id="DB12471">
    <property type="generic name" value="Ibrexafungerp"/>
</dbReference>
<dbReference type="DrugBank" id="DB00555">
    <property type="generic name" value="Lamotrigine"/>
</dbReference>
<dbReference type="DrugBank" id="DB00455">
    <property type="generic name" value="Loratadine"/>
</dbReference>
<dbReference type="DrugBank" id="DB00186">
    <property type="generic name" value="Lorazepam"/>
</dbReference>
<dbReference type="DrugBank" id="DB06077">
    <property type="generic name" value="Lumateperone"/>
</dbReference>
<dbReference type="DrugBank" id="DB05018">
    <property type="generic name" value="Migalastat"/>
</dbReference>
<dbReference type="DrugBank" id="DB00295">
    <property type="generic name" value="Morphine"/>
</dbReference>
<dbReference type="DrugBank" id="DB00842">
    <property type="generic name" value="Oxazepam"/>
</dbReference>
<dbReference type="DrugBank" id="DB00960">
    <property type="generic name" value="Pindolol"/>
</dbReference>
<dbReference type="DrugBank" id="DB00794">
    <property type="generic name" value="Primidone"/>
</dbReference>
<dbReference type="DrugBank" id="DB09288">
    <property type="generic name" value="Propacetamol"/>
</dbReference>
<dbReference type="DrugBank" id="DB00503">
    <property type="generic name" value="Ritonavir"/>
</dbReference>
<dbReference type="DrugBank" id="DB00871">
    <property type="generic name" value="Terbutaline"/>
</dbReference>
<dbReference type="DrugBank" id="DB06045">
    <property type="generic name" value="Trofinetide"/>
</dbReference>
<dbReference type="DrugBank" id="DB00197">
    <property type="generic name" value="Troglitazone"/>
</dbReference>
<dbReference type="DrugBank" id="DB00313">
    <property type="generic name" value="Valproic acid"/>
</dbReference>
<dbReference type="DrugBank" id="DB09185">
    <property type="generic name" value="Viloxazine"/>
</dbReference>
<dbReference type="SwissLipids" id="SLP:000001709"/>
<dbReference type="CAZy" id="GT1">
    <property type="family name" value="Glycosyltransferase Family 1"/>
</dbReference>
<dbReference type="GlyConnect" id="2087">
    <property type="glycosylation" value="2 N-Linked glycans (1 site)"/>
</dbReference>
<dbReference type="GlyCosmos" id="P54855">
    <property type="glycosylation" value="3 sites, 4 glycans"/>
</dbReference>
<dbReference type="GlyGen" id="P54855">
    <property type="glycosylation" value="3 sites, 4 N-linked glycans (1 site)"/>
</dbReference>
<dbReference type="iPTMnet" id="P54855"/>
<dbReference type="PhosphoSitePlus" id="P54855"/>
<dbReference type="BioMuta" id="UGT2B15"/>
<dbReference type="DMDM" id="332278237"/>
<dbReference type="jPOST" id="P54855"/>
<dbReference type="MassIVE" id="P54855"/>
<dbReference type="PaxDb" id="9606-ENSP00000341045"/>
<dbReference type="PeptideAtlas" id="P54855"/>
<dbReference type="ProteomicsDB" id="56742"/>
<dbReference type="Antibodypedia" id="24200">
    <property type="antibodies" value="97 antibodies from 21 providers"/>
</dbReference>
<dbReference type="DNASU" id="7366"/>
<dbReference type="Ensembl" id="ENST00000338206.6">
    <property type="protein sequence ID" value="ENSP00000341045.5"/>
    <property type="gene ID" value="ENSG00000196620.10"/>
</dbReference>
<dbReference type="GeneID" id="7366"/>
<dbReference type="KEGG" id="hsa:7366"/>
<dbReference type="MANE-Select" id="ENST00000338206.6">
    <property type="protein sequence ID" value="ENSP00000341045.5"/>
    <property type="RefSeq nucleotide sequence ID" value="NM_001076.4"/>
    <property type="RefSeq protein sequence ID" value="NP_001067.2"/>
</dbReference>
<dbReference type="UCSC" id="uc021xow.2">
    <property type="organism name" value="human"/>
</dbReference>
<dbReference type="AGR" id="HGNC:12546"/>
<dbReference type="CTD" id="7366"/>
<dbReference type="DisGeNET" id="7366"/>
<dbReference type="GeneCards" id="UGT2B15"/>
<dbReference type="HGNC" id="HGNC:12546">
    <property type="gene designation" value="UGT2B15"/>
</dbReference>
<dbReference type="HPA" id="ENSG00000196620">
    <property type="expression patterns" value="Group enriched (gallbladder, liver)"/>
</dbReference>
<dbReference type="MalaCards" id="UGT2B15"/>
<dbReference type="MIM" id="600069">
    <property type="type" value="gene"/>
</dbReference>
<dbReference type="neXtProt" id="NX_P54855"/>
<dbReference type="OpenTargets" id="ENSG00000196620"/>
<dbReference type="PharmGKB" id="PA37188"/>
<dbReference type="VEuPathDB" id="HostDB:ENSG00000196620"/>
<dbReference type="eggNOG" id="KOG1192">
    <property type="taxonomic scope" value="Eukaryota"/>
</dbReference>
<dbReference type="GeneTree" id="ENSGT00940000163930"/>
<dbReference type="HOGENOM" id="CLU_012949_3_0_1"/>
<dbReference type="InParanoid" id="P54855"/>
<dbReference type="OMA" id="EYYDYSN"/>
<dbReference type="OrthoDB" id="5835829at2759"/>
<dbReference type="PAN-GO" id="P54855">
    <property type="GO annotations" value="3 GO annotations based on evolutionary models"/>
</dbReference>
<dbReference type="PhylomeDB" id="P54855"/>
<dbReference type="TreeFam" id="TF315472"/>
<dbReference type="BRENDA" id="2.4.1.17">
    <property type="organism ID" value="2681"/>
</dbReference>
<dbReference type="PathwayCommons" id="P54855"/>
<dbReference type="Reactome" id="R-HSA-156588">
    <property type="pathway name" value="Glucuronidation"/>
</dbReference>
<dbReference type="Reactome" id="R-HSA-9749641">
    <property type="pathway name" value="Aspirin ADME"/>
</dbReference>
<dbReference type="Reactome" id="R-HSA-9753281">
    <property type="pathway name" value="Paracetamol ADME"/>
</dbReference>
<dbReference type="SABIO-RK" id="P54855"/>
<dbReference type="SignaLink" id="P54855"/>
<dbReference type="BioGRID-ORCS" id="7366">
    <property type="hits" value="30 hits in 1048 CRISPR screens"/>
</dbReference>
<dbReference type="GeneWiki" id="UGT2B15"/>
<dbReference type="GenomeRNAi" id="7366"/>
<dbReference type="Pharos" id="P54855">
    <property type="development level" value="Tbio"/>
</dbReference>
<dbReference type="PRO" id="PR:P54855"/>
<dbReference type="Proteomes" id="UP000005640">
    <property type="component" value="Chromosome 4"/>
</dbReference>
<dbReference type="RNAct" id="P54855">
    <property type="molecule type" value="protein"/>
</dbReference>
<dbReference type="Bgee" id="ENSG00000196620">
    <property type="expression patterns" value="Expressed in gall bladder and 49 other cell types or tissues"/>
</dbReference>
<dbReference type="GO" id="GO:0005789">
    <property type="term" value="C:endoplasmic reticulum membrane"/>
    <property type="evidence" value="ECO:0000304"/>
    <property type="project" value="Reactome"/>
</dbReference>
<dbReference type="GO" id="GO:0015020">
    <property type="term" value="F:glucuronosyltransferase activity"/>
    <property type="evidence" value="ECO:0000314"/>
    <property type="project" value="UniProtKB"/>
</dbReference>
<dbReference type="GO" id="GO:0008210">
    <property type="term" value="P:estrogen metabolic process"/>
    <property type="evidence" value="ECO:0000314"/>
    <property type="project" value="UniProtKB"/>
</dbReference>
<dbReference type="GO" id="GO:0008202">
    <property type="term" value="P:steroid metabolic process"/>
    <property type="evidence" value="ECO:0000304"/>
    <property type="project" value="ProtInc"/>
</dbReference>
<dbReference type="GO" id="GO:0006805">
    <property type="term" value="P:xenobiotic metabolic process"/>
    <property type="evidence" value="ECO:0000314"/>
    <property type="project" value="BHF-UCL"/>
</dbReference>
<dbReference type="CDD" id="cd03784">
    <property type="entry name" value="GT1_Gtf-like"/>
    <property type="match status" value="1"/>
</dbReference>
<dbReference type="FunFam" id="3.40.50.2000:FF:000001">
    <property type="entry name" value="UDP-glucuronosyltransferase"/>
    <property type="match status" value="1"/>
</dbReference>
<dbReference type="FunFam" id="3.40.50.2000:FF:000081">
    <property type="entry name" value="UDP-glucuronosyltransferase 2A2"/>
    <property type="match status" value="1"/>
</dbReference>
<dbReference type="Gene3D" id="3.40.50.2000">
    <property type="entry name" value="Glycogen Phosphorylase B"/>
    <property type="match status" value="2"/>
</dbReference>
<dbReference type="InterPro" id="IPR050271">
    <property type="entry name" value="UDP-glycosyltransferase"/>
</dbReference>
<dbReference type="InterPro" id="IPR002213">
    <property type="entry name" value="UDP_glucos_trans"/>
</dbReference>
<dbReference type="InterPro" id="IPR035595">
    <property type="entry name" value="UDP_glycos_trans_CS"/>
</dbReference>
<dbReference type="PANTHER" id="PTHR48043">
    <property type="entry name" value="EG:EG0003.4 PROTEIN-RELATED"/>
    <property type="match status" value="1"/>
</dbReference>
<dbReference type="PANTHER" id="PTHR48043:SF64">
    <property type="entry name" value="UDP-GLUCURONOSYLTRANSFERASE 2B15"/>
    <property type="match status" value="1"/>
</dbReference>
<dbReference type="Pfam" id="PF00201">
    <property type="entry name" value="UDPGT"/>
    <property type="match status" value="1"/>
</dbReference>
<dbReference type="SUPFAM" id="SSF53756">
    <property type="entry name" value="UDP-Glycosyltransferase/glycogen phosphorylase"/>
    <property type="match status" value="1"/>
</dbReference>
<dbReference type="PROSITE" id="PS00375">
    <property type="entry name" value="UDPGT"/>
    <property type="match status" value="1"/>
</dbReference>
<organism>
    <name type="scientific">Homo sapiens</name>
    <name type="common">Human</name>
    <dbReference type="NCBI Taxonomy" id="9606"/>
    <lineage>
        <taxon>Eukaryota</taxon>
        <taxon>Metazoa</taxon>
        <taxon>Chordata</taxon>
        <taxon>Craniata</taxon>
        <taxon>Vertebrata</taxon>
        <taxon>Euteleostomi</taxon>
        <taxon>Mammalia</taxon>
        <taxon>Eutheria</taxon>
        <taxon>Euarchontoglires</taxon>
        <taxon>Primates</taxon>
        <taxon>Haplorrhini</taxon>
        <taxon>Catarrhini</taxon>
        <taxon>Hominidae</taxon>
        <taxon>Homo</taxon>
    </lineage>
</organism>
<feature type="signal peptide" evidence="3">
    <location>
        <begin position="1"/>
        <end position="23"/>
    </location>
</feature>
<feature type="chain" id="PRO_0000036039" description="UDP-glucuronosyltransferase 2B15">
    <location>
        <begin position="24"/>
        <end position="530"/>
    </location>
</feature>
<feature type="transmembrane region" description="Helical" evidence="3">
    <location>
        <begin position="495"/>
        <end position="515"/>
    </location>
</feature>
<feature type="modified residue" description="N6-succinyllysine" evidence="2">
    <location>
        <position position="136"/>
    </location>
</feature>
<feature type="glycosylation site" description="N-linked (GlcNAc...) asparagine" evidence="8">
    <location>
        <position position="65"/>
    </location>
</feature>
<feature type="glycosylation site" description="N-linked (GlcNAc...) asparagine" evidence="3">
    <location>
        <position position="316"/>
    </location>
</feature>
<feature type="glycosylation site" description="N-linked (GlcNAc...) asparagine" evidence="3">
    <location>
        <position position="483"/>
    </location>
</feature>
<feature type="sequence variant" id="VAR_007713" description="In dbSNP:rs1902023." evidence="10 11">
    <original>Y</original>
    <variation>D</variation>
    <location>
        <position position="85"/>
    </location>
</feature>
<feature type="sequence variant" id="VAR_018348" description="In dbSNP:rs4148269." evidence="4 5 10 11 12">
    <original>K</original>
    <variation>T</variation>
    <location>
        <position position="523"/>
    </location>
</feature>
<feature type="sequence conflict" description="In Ref. 7; AAA83406." evidence="14" ref="7">
    <original>E</original>
    <variation>A</variation>
    <location>
        <position position="119"/>
    </location>
</feature>
<feature type="sequence conflict" description="In Ref. 7; AAA83406." evidence="14" ref="7">
    <original>K</original>
    <variation>R</variation>
    <location>
        <position position="145"/>
    </location>
</feature>
<feature type="sequence conflict" description="In Ref. 7; AAA83406." evidence="14" ref="7">
    <original>LADALN</original>
    <variation>PGDPVF</variation>
    <location>
        <begin position="150"/>
        <end position="155"/>
    </location>
</feature>
<feature type="sequence conflict" description="In Ref. 7; AAA83406." evidence="14" ref="7">
    <original>A</original>
    <variation>S</variation>
    <location>
        <position position="162"/>
    </location>
</feature>
<feature type="sequence conflict" description="In Ref. 7; AAA83406." evidence="14" ref="7">
    <original>F</original>
    <variation>L</variation>
    <location>
        <position position="165"/>
    </location>
</feature>
<feature type="sequence conflict" description="In Ref. 7; AAA83406." evidence="14" ref="7">
    <original>LYSLRFSV</original>
    <variation>VYRSRISR</variation>
    <location>
        <begin position="170"/>
        <end position="177"/>
    </location>
</feature>
<feature type="sequence conflict" description="In Ref. 7; AAA83406." evidence="14" ref="7">
    <original>F</original>
    <variation>I</variation>
    <location>
        <position position="181"/>
    </location>
</feature>
<feature type="sequence conflict" description="In Ref. 7; AAA83406." evidence="14" ref="7">
    <original>S</original>
    <variation>I</variation>
    <location>
        <position position="203"/>
    </location>
</feature>
<feature type="sequence conflict" description="In Ref. 7; AAA83406." evidence="14" ref="7">
    <original>M</original>
    <variation>L</variation>
    <location>
        <position position="293"/>
    </location>
</feature>
<feature type="sequence conflict" description="In Ref. 7; AAA83406." evidence="14" ref="7">
    <original>H</original>
    <variation>D</variation>
    <location>
        <position position="401"/>
    </location>
</feature>
<feature type="sequence conflict" description="In Ref. 7; AAA83406." evidence="14" ref="7">
    <original>V</original>
    <variation>A</variation>
    <location>
        <position position="443"/>
    </location>
</feature>
<feature type="sequence conflict" description="In Ref. 7; AAA83406." evidence="14" ref="7">
    <original>C</original>
    <variation>W</variation>
    <location>
        <position position="501"/>
    </location>
</feature>
<feature type="helix" evidence="22">
    <location>
        <begin position="291"/>
        <end position="298"/>
    </location>
</feature>
<feature type="helix" evidence="22">
    <location>
        <begin position="299"/>
        <end position="303"/>
    </location>
</feature>
<feature type="strand" evidence="22">
    <location>
        <begin position="305"/>
        <end position="308"/>
    </location>
</feature>
<feature type="helix" evidence="22">
    <location>
        <begin position="314"/>
        <end position="316"/>
    </location>
</feature>
<feature type="helix" evidence="22">
    <location>
        <begin position="319"/>
        <end position="329"/>
    </location>
</feature>
<feature type="strand" evidence="22">
    <location>
        <begin position="332"/>
        <end position="339"/>
    </location>
</feature>
<feature type="strand" evidence="22">
    <location>
        <begin position="352"/>
        <end position="357"/>
    </location>
</feature>
<feature type="helix" evidence="22">
    <location>
        <begin position="360"/>
        <end position="364"/>
    </location>
</feature>
<feature type="strand" evidence="22">
    <location>
        <begin position="369"/>
        <end position="374"/>
    </location>
</feature>
<feature type="helix" evidence="22">
    <location>
        <begin position="378"/>
        <end position="387"/>
    </location>
</feature>
<feature type="strand" evidence="22">
    <location>
        <begin position="391"/>
        <end position="393"/>
    </location>
</feature>
<feature type="helix" evidence="22">
    <location>
        <begin position="398"/>
        <end position="409"/>
    </location>
</feature>
<feature type="strand" evidence="22">
    <location>
        <begin position="412"/>
        <end position="415"/>
    </location>
</feature>
<feature type="turn" evidence="22">
    <location>
        <begin position="418"/>
        <end position="420"/>
    </location>
</feature>
<feature type="helix" evidence="22">
    <location>
        <begin position="423"/>
        <end position="435"/>
    </location>
</feature>
<feature type="helix" evidence="22">
    <location>
        <begin position="437"/>
        <end position="450"/>
    </location>
</feature>
<gene>
    <name evidence="21" type="primary">UGT2B15</name>
    <name evidence="17" type="synonym">UGT2B8</name>
</gene>
<evidence type="ECO:0000250" key="1">
    <source>
        <dbReference type="UniProtKB" id="P36511"/>
    </source>
</evidence>
<evidence type="ECO:0000250" key="2">
    <source>
        <dbReference type="UniProtKB" id="Q8BWQ1"/>
    </source>
</evidence>
<evidence type="ECO:0000255" key="3"/>
<evidence type="ECO:0000269" key="4">
    <source>
    </source>
</evidence>
<evidence type="ECO:0000269" key="5">
    <source>
    </source>
</evidence>
<evidence type="ECO:0000269" key="6">
    <source>
    </source>
</evidence>
<evidence type="ECO:0000269" key="7">
    <source>
    </source>
</evidence>
<evidence type="ECO:0000269" key="8">
    <source>
    </source>
</evidence>
<evidence type="ECO:0000269" key="9">
    <source>
    </source>
</evidence>
<evidence type="ECO:0000269" key="10">
    <source>
    </source>
</evidence>
<evidence type="ECO:0000269" key="11">
    <source>
    </source>
</evidence>
<evidence type="ECO:0000269" key="12">
    <source>
    </source>
</evidence>
<evidence type="ECO:0000303" key="13">
    <source>
    </source>
</evidence>
<evidence type="ECO:0000305" key="14"/>
<evidence type="ECO:0000305" key="15">
    <source>
    </source>
</evidence>
<evidence type="ECO:0000305" key="16">
    <source>
    </source>
</evidence>
<evidence type="ECO:0000305" key="17">
    <source>
    </source>
</evidence>
<evidence type="ECO:0000305" key="18">
    <source>
    </source>
</evidence>
<evidence type="ECO:0000305" key="19">
    <source>
    </source>
</evidence>
<evidence type="ECO:0000305" key="20">
    <source>
    </source>
</evidence>
<evidence type="ECO:0000312" key="21">
    <source>
        <dbReference type="HGNC" id="HGNC:12546"/>
    </source>
</evidence>
<evidence type="ECO:0007829" key="22">
    <source>
        <dbReference type="PDB" id="6IPB"/>
    </source>
</evidence>
<proteinExistence type="evidence at protein level"/>
<reference key="1">
    <citation type="journal article" date="1993" name="Biochemistry">
        <title>Characterization of a cloned human dihydrotestosterone/androstanediol UDP-glucuronosyltransferase and its comparison to other steroid isoforms.</title>
        <authorList>
            <person name="Chen F."/>
            <person name="Ritter J.K."/>
            <person name="Wang M.G."/>
            <person name="McBride O.W."/>
            <person name="Lubet R.A."/>
            <person name="Owens I.S."/>
        </authorList>
    </citation>
    <scope>NUCLEOTIDE SEQUENCE [MRNA]</scope>
    <scope>CHARACTERIZATION</scope>
    <scope>TISSUE SPECIFICITY</scope>
    <scope>VARIANTS ASP-85 AND THR-523</scope>
    <source>
        <tissue>Liver</tissue>
    </source>
</reference>
<reference key="2">
    <citation type="journal article" date="1994" name="Drug Metab. Dispos.">
        <title>Stable expression of a human liver UDP-glucuronosyltransferase (UGT2B15) with activity toward steroid and xenobiotic substrates.</title>
        <authorList>
            <person name="Green M.D."/>
            <person name="Oturu E.M."/>
            <person name="Tephly T.R."/>
        </authorList>
    </citation>
    <scope>NUCLEOTIDE SEQUENCE [MRNA]</scope>
    <scope>FUNCTION</scope>
    <scope>CATALYTIC ACTIVITY</scope>
    <scope>BIOPHYSICOCHEMICAL PROPERTIES</scope>
    <scope>VARIANTS ASP-85 AND THR-523</scope>
    <source>
        <tissue>Liver</tissue>
    </source>
</reference>
<reference key="3">
    <citation type="journal article" date="1997" name="Pharmacogenetics">
        <title>Isolation and characterization of UGT2B15(Y85): a UDP-glucuronosyltransferase encoded by a polymorphic gene.</title>
        <authorList>
            <person name="Levesque E."/>
            <person name="Beaulieu M."/>
            <person name="Green M.D."/>
            <person name="Tephly T.R."/>
            <person name="Belanger A."/>
            <person name="Hum D.W."/>
        </authorList>
    </citation>
    <scope>NUCLEOTIDE SEQUENCE [MRNA]</scope>
    <scope>FUNCTION</scope>
    <scope>CATALYTIC ACTIVITY</scope>
    <scope>VARIANT THR-523</scope>
</reference>
<reference key="4">
    <citation type="journal article" date="2004" name="Nat. Genet.">
        <title>Complete sequencing and characterization of 21,243 full-length human cDNAs.</title>
        <authorList>
            <person name="Ota T."/>
            <person name="Suzuki Y."/>
            <person name="Nishikawa T."/>
            <person name="Otsuki T."/>
            <person name="Sugiyama T."/>
            <person name="Irie R."/>
            <person name="Wakamatsu A."/>
            <person name="Hayashi K."/>
            <person name="Sato H."/>
            <person name="Nagai K."/>
            <person name="Kimura K."/>
            <person name="Makita H."/>
            <person name="Sekine M."/>
            <person name="Obayashi M."/>
            <person name="Nishi T."/>
            <person name="Shibahara T."/>
            <person name="Tanaka T."/>
            <person name="Ishii S."/>
            <person name="Yamamoto J."/>
            <person name="Saito K."/>
            <person name="Kawai Y."/>
            <person name="Isono Y."/>
            <person name="Nakamura Y."/>
            <person name="Nagahari K."/>
            <person name="Murakami K."/>
            <person name="Yasuda T."/>
            <person name="Iwayanagi T."/>
            <person name="Wagatsuma M."/>
            <person name="Shiratori A."/>
            <person name="Sudo H."/>
            <person name="Hosoiri T."/>
            <person name="Kaku Y."/>
            <person name="Kodaira H."/>
            <person name="Kondo H."/>
            <person name="Sugawara M."/>
            <person name="Takahashi M."/>
            <person name="Kanda K."/>
            <person name="Yokoi T."/>
            <person name="Furuya T."/>
            <person name="Kikkawa E."/>
            <person name="Omura Y."/>
            <person name="Abe K."/>
            <person name="Kamihara K."/>
            <person name="Katsuta N."/>
            <person name="Sato K."/>
            <person name="Tanikawa M."/>
            <person name="Yamazaki M."/>
            <person name="Ninomiya K."/>
            <person name="Ishibashi T."/>
            <person name="Yamashita H."/>
            <person name="Murakawa K."/>
            <person name="Fujimori K."/>
            <person name="Tanai H."/>
            <person name="Kimata M."/>
            <person name="Watanabe M."/>
            <person name="Hiraoka S."/>
            <person name="Chiba Y."/>
            <person name="Ishida S."/>
            <person name="Ono Y."/>
            <person name="Takiguchi S."/>
            <person name="Watanabe S."/>
            <person name="Yosida M."/>
            <person name="Hotuta T."/>
            <person name="Kusano J."/>
            <person name="Kanehori K."/>
            <person name="Takahashi-Fujii A."/>
            <person name="Hara H."/>
            <person name="Tanase T.-O."/>
            <person name="Nomura Y."/>
            <person name="Togiya S."/>
            <person name="Komai F."/>
            <person name="Hara R."/>
            <person name="Takeuchi K."/>
            <person name="Arita M."/>
            <person name="Imose N."/>
            <person name="Musashino K."/>
            <person name="Yuuki H."/>
            <person name="Oshima A."/>
            <person name="Sasaki N."/>
            <person name="Aotsuka S."/>
            <person name="Yoshikawa Y."/>
            <person name="Matsunawa H."/>
            <person name="Ichihara T."/>
            <person name="Shiohata N."/>
            <person name="Sano S."/>
            <person name="Moriya S."/>
            <person name="Momiyama H."/>
            <person name="Satoh N."/>
            <person name="Takami S."/>
            <person name="Terashima Y."/>
            <person name="Suzuki O."/>
            <person name="Nakagawa S."/>
            <person name="Senoh A."/>
            <person name="Mizoguchi H."/>
            <person name="Goto Y."/>
            <person name="Shimizu F."/>
            <person name="Wakebe H."/>
            <person name="Hishigaki H."/>
            <person name="Watanabe T."/>
            <person name="Sugiyama A."/>
            <person name="Takemoto M."/>
            <person name="Kawakami B."/>
            <person name="Yamazaki M."/>
            <person name="Watanabe K."/>
            <person name="Kumagai A."/>
            <person name="Itakura S."/>
            <person name="Fukuzumi Y."/>
            <person name="Fujimori Y."/>
            <person name="Komiyama M."/>
            <person name="Tashiro H."/>
            <person name="Tanigami A."/>
            <person name="Fujiwara T."/>
            <person name="Ono T."/>
            <person name="Yamada K."/>
            <person name="Fujii Y."/>
            <person name="Ozaki K."/>
            <person name="Hirao M."/>
            <person name="Ohmori Y."/>
            <person name="Kawabata A."/>
            <person name="Hikiji T."/>
            <person name="Kobatake N."/>
            <person name="Inagaki H."/>
            <person name="Ikema Y."/>
            <person name="Okamoto S."/>
            <person name="Okitani R."/>
            <person name="Kawakami T."/>
            <person name="Noguchi S."/>
            <person name="Itoh T."/>
            <person name="Shigeta K."/>
            <person name="Senba T."/>
            <person name="Matsumura K."/>
            <person name="Nakajima Y."/>
            <person name="Mizuno T."/>
            <person name="Morinaga M."/>
            <person name="Sasaki M."/>
            <person name="Togashi T."/>
            <person name="Oyama M."/>
            <person name="Hata H."/>
            <person name="Watanabe M."/>
            <person name="Komatsu T."/>
            <person name="Mizushima-Sugano J."/>
            <person name="Satoh T."/>
            <person name="Shirai Y."/>
            <person name="Takahashi Y."/>
            <person name="Nakagawa K."/>
            <person name="Okumura K."/>
            <person name="Nagase T."/>
            <person name="Nomura N."/>
            <person name="Kikuchi H."/>
            <person name="Masuho Y."/>
            <person name="Yamashita R."/>
            <person name="Nakai K."/>
            <person name="Yada T."/>
            <person name="Nakamura Y."/>
            <person name="Ohara O."/>
            <person name="Isogai T."/>
            <person name="Sugano S."/>
        </authorList>
    </citation>
    <scope>NUCLEOTIDE SEQUENCE [LARGE SCALE MRNA]</scope>
    <scope>VARIANT THR-523</scope>
    <source>
        <tissue>Mammary gland</tissue>
    </source>
</reference>
<reference key="5">
    <citation type="journal article" date="2005" name="Nature">
        <title>Generation and annotation of the DNA sequences of human chromosomes 2 and 4.</title>
        <authorList>
            <person name="Hillier L.W."/>
            <person name="Graves T.A."/>
            <person name="Fulton R.S."/>
            <person name="Fulton L.A."/>
            <person name="Pepin K.H."/>
            <person name="Minx P."/>
            <person name="Wagner-McPherson C."/>
            <person name="Layman D."/>
            <person name="Wylie K."/>
            <person name="Sekhon M."/>
            <person name="Becker M.C."/>
            <person name="Fewell G.A."/>
            <person name="Delehaunty K.D."/>
            <person name="Miner T.L."/>
            <person name="Nash W.E."/>
            <person name="Kremitzki C."/>
            <person name="Oddy L."/>
            <person name="Du H."/>
            <person name="Sun H."/>
            <person name="Bradshaw-Cordum H."/>
            <person name="Ali J."/>
            <person name="Carter J."/>
            <person name="Cordes M."/>
            <person name="Harris A."/>
            <person name="Isak A."/>
            <person name="van Brunt A."/>
            <person name="Nguyen C."/>
            <person name="Du F."/>
            <person name="Courtney L."/>
            <person name="Kalicki J."/>
            <person name="Ozersky P."/>
            <person name="Abbott S."/>
            <person name="Armstrong J."/>
            <person name="Belter E.A."/>
            <person name="Caruso L."/>
            <person name="Cedroni M."/>
            <person name="Cotton M."/>
            <person name="Davidson T."/>
            <person name="Desai A."/>
            <person name="Elliott G."/>
            <person name="Erb T."/>
            <person name="Fronick C."/>
            <person name="Gaige T."/>
            <person name="Haakenson W."/>
            <person name="Haglund K."/>
            <person name="Holmes A."/>
            <person name="Harkins R."/>
            <person name="Kim K."/>
            <person name="Kruchowski S.S."/>
            <person name="Strong C.M."/>
            <person name="Grewal N."/>
            <person name="Goyea E."/>
            <person name="Hou S."/>
            <person name="Levy A."/>
            <person name="Martinka S."/>
            <person name="Mead K."/>
            <person name="McLellan M.D."/>
            <person name="Meyer R."/>
            <person name="Randall-Maher J."/>
            <person name="Tomlinson C."/>
            <person name="Dauphin-Kohlberg S."/>
            <person name="Kozlowicz-Reilly A."/>
            <person name="Shah N."/>
            <person name="Swearengen-Shahid S."/>
            <person name="Snider J."/>
            <person name="Strong J.T."/>
            <person name="Thompson J."/>
            <person name="Yoakum M."/>
            <person name="Leonard S."/>
            <person name="Pearman C."/>
            <person name="Trani L."/>
            <person name="Radionenko M."/>
            <person name="Waligorski J.E."/>
            <person name="Wang C."/>
            <person name="Rock S.M."/>
            <person name="Tin-Wollam A.-M."/>
            <person name="Maupin R."/>
            <person name="Latreille P."/>
            <person name="Wendl M.C."/>
            <person name="Yang S.-P."/>
            <person name="Pohl C."/>
            <person name="Wallis J.W."/>
            <person name="Spieth J."/>
            <person name="Bieri T.A."/>
            <person name="Berkowicz N."/>
            <person name="Nelson J.O."/>
            <person name="Osborne J."/>
            <person name="Ding L."/>
            <person name="Meyer R."/>
            <person name="Sabo A."/>
            <person name="Shotland Y."/>
            <person name="Sinha P."/>
            <person name="Wohldmann P.E."/>
            <person name="Cook L.L."/>
            <person name="Hickenbotham M.T."/>
            <person name="Eldred J."/>
            <person name="Williams D."/>
            <person name="Jones T.A."/>
            <person name="She X."/>
            <person name="Ciccarelli F.D."/>
            <person name="Izaurralde E."/>
            <person name="Taylor J."/>
            <person name="Schmutz J."/>
            <person name="Myers R.M."/>
            <person name="Cox D.R."/>
            <person name="Huang X."/>
            <person name="McPherson J.D."/>
            <person name="Mardis E.R."/>
            <person name="Clifton S.W."/>
            <person name="Warren W.C."/>
            <person name="Chinwalla A.T."/>
            <person name="Eddy S.R."/>
            <person name="Marra M.A."/>
            <person name="Ovcharenko I."/>
            <person name="Furey T.S."/>
            <person name="Miller W."/>
            <person name="Eichler E.E."/>
            <person name="Bork P."/>
            <person name="Suyama M."/>
            <person name="Torrents D."/>
            <person name="Waterston R.H."/>
            <person name="Wilson R.K."/>
        </authorList>
    </citation>
    <scope>NUCLEOTIDE SEQUENCE [LARGE SCALE GENOMIC DNA]</scope>
</reference>
<reference key="6">
    <citation type="submission" date="2005-07" db="EMBL/GenBank/DDBJ databases">
        <authorList>
            <person name="Mural R.J."/>
            <person name="Istrail S."/>
            <person name="Sutton G.G."/>
            <person name="Florea L."/>
            <person name="Halpern A.L."/>
            <person name="Mobarry C.M."/>
            <person name="Lippert R."/>
            <person name="Walenz B."/>
            <person name="Shatkay H."/>
            <person name="Dew I."/>
            <person name="Miller J.R."/>
            <person name="Flanigan M.J."/>
            <person name="Edwards N.J."/>
            <person name="Bolanos R."/>
            <person name="Fasulo D."/>
            <person name="Halldorsson B.V."/>
            <person name="Hannenhalli S."/>
            <person name="Turner R."/>
            <person name="Yooseph S."/>
            <person name="Lu F."/>
            <person name="Nusskern D.R."/>
            <person name="Shue B.C."/>
            <person name="Zheng X.H."/>
            <person name="Zhong F."/>
            <person name="Delcher A.L."/>
            <person name="Huson D.H."/>
            <person name="Kravitz S.A."/>
            <person name="Mouchard L."/>
            <person name="Reinert K."/>
            <person name="Remington K.A."/>
            <person name="Clark A.G."/>
            <person name="Waterman M.S."/>
            <person name="Eichler E.E."/>
            <person name="Adams M.D."/>
            <person name="Hunkapiller M.W."/>
            <person name="Myers E.W."/>
            <person name="Venter J.C."/>
        </authorList>
    </citation>
    <scope>NUCLEOTIDE SEQUENCE [LARGE SCALE GENOMIC DNA]</scope>
</reference>
<reference key="7">
    <citation type="journal article" date="1990" name="Arch. Biochem. Biophys.">
        <title>Characterization and primary sequence of a human hepatic microsomal estriol UDPglucuronosyltransferase.</title>
        <authorList>
            <person name="Coffman B.L."/>
            <person name="Tephly T.R."/>
            <person name="Irshaid Y.M."/>
            <person name="Green M.D."/>
            <person name="Smith C."/>
            <person name="Jackson M.R."/>
            <person name="Wooster R."/>
            <person name="Burchell B."/>
        </authorList>
    </citation>
    <scope>NUCLEOTIDE SEQUENCE [MRNA] OF 8-530</scope>
    <scope>PARTIAL PROTEIN SEQUENCE</scope>
    <source>
        <tissue>Liver</tissue>
    </source>
</reference>
<reference key="8">
    <citation type="journal article" date="2006" name="Drug Metab. Dispos.">
        <title>Human UDP-glucuronosyltransferase, UGT1A8, glucuronidates dihydrotestosterone to a monoglucuronide and further to a structurally novel diglucuronide.</title>
        <authorList>
            <person name="Murai T."/>
            <person name="Samata N."/>
            <person name="Iwabuchi H."/>
            <person name="Ikeda T."/>
        </authorList>
    </citation>
    <scope>FUNCTION</scope>
    <scope>CATALYTIC ACTIVITY</scope>
    <scope>BIOPHYSICOCHEMICAL PROPERTIES</scope>
    <scope>SUBSTRATE SPECIFICITY</scope>
</reference>
<reference key="9">
    <citation type="journal article" date="2008" name="Drug Metab. Dispos.">
        <title>The configuration of the 17-hydroxy group variably influences the glucuronidation of beta-estradiol and epiestradiol by human UDP-glucuronosyltransferases.</title>
        <authorList>
            <person name="Itaeaho K."/>
            <person name="Mackenzie P.I."/>
            <person name="Ikushiro S."/>
            <person name="Miners J.O."/>
            <person name="Finel M."/>
        </authorList>
    </citation>
    <scope>FUNCTION</scope>
    <scope>CATALYTIC ACTIVITY</scope>
    <scope>BIOPHYSICOCHEMICAL PROPERTIES</scope>
</reference>
<reference key="10">
    <citation type="journal article" date="2009" name="J. Proteome Res.">
        <title>Glycoproteomics analysis of human liver tissue by combination of multiple enzyme digestion and hydrazide chemistry.</title>
        <authorList>
            <person name="Chen R."/>
            <person name="Jiang X."/>
            <person name="Sun D."/>
            <person name="Han G."/>
            <person name="Wang F."/>
            <person name="Ye M."/>
            <person name="Wang L."/>
            <person name="Zou H."/>
        </authorList>
    </citation>
    <scope>GLYCOSYLATION [LARGE SCALE ANALYSIS] AT ASN-65</scope>
    <source>
        <tissue>Liver</tissue>
    </source>
</reference>
<reference key="11">
    <citation type="journal article" date="2013" name="Drug Metab. Dispos.">
        <title>Regiospecificity and stereospecificity of human UDP-glucuronosyltransferases in the glucuronidation of estriol, 16-epiestriol, 17-epiestriol, and 13-epiestradiol.</title>
        <authorList>
            <person name="Sneitz N."/>
            <person name="Vahermo M."/>
            <person name="Mosorin J."/>
            <person name="Laakkonen L."/>
            <person name="Poirier D."/>
            <person name="Finel M."/>
        </authorList>
    </citation>
    <scope>FUNCTION</scope>
    <scope>CATALYTIC ACTIVITY</scope>
    <scope>BIOPHYSICOCHEMICAL PROPERTIES</scope>
    <scope>SUBSTRATE SPECIFICITY</scope>
</reference>
<reference key="12">
    <citation type="journal article" date="2014" name="J. Proteomics">
        <title>An enzyme assisted RP-RPLC approach for in-depth analysis of human liver phosphoproteome.</title>
        <authorList>
            <person name="Bian Y."/>
            <person name="Song C."/>
            <person name="Cheng K."/>
            <person name="Dong M."/>
            <person name="Wang F."/>
            <person name="Huang J."/>
            <person name="Sun D."/>
            <person name="Wang L."/>
            <person name="Ye M."/>
            <person name="Zou H."/>
        </authorList>
    </citation>
    <scope>IDENTIFICATION BY MASS SPECTROMETRY [LARGE SCALE ANALYSIS]</scope>
    <source>
        <tissue>Liver</tissue>
    </source>
</reference>
<reference key="13">
    <citation type="journal article" date="2002" name="Drug Metab. Pharmacokinet.">
        <title>A major genotype in UDP-glucuronosyltransferase 2B15.</title>
        <authorList>
            <person name="Toide K."/>
            <person name="Umeda S."/>
            <person name="Yamazaki H."/>
            <person name="Takahashi Y."/>
            <person name="Terauchi Y."/>
            <person name="Fujii T."/>
            <person name="Kamataki T."/>
        </authorList>
    </citation>
    <scope>VARIANT THR-523</scope>
</reference>
<comment type="function">
    <text evidence="1 6 7 9 10 12">UDP-glucuronosyltransferase (UGT) that catalyzes phase II biotransformation reactions in which lipophilic substrates are conjugated with glucuronic acid to increase the metabolite's water solubility, thereby facilitating excretion into either the urine or bile (PubMed:16595710, PubMed:18719240, PubMed:23288867, PubMed:7835232, PubMed:9295060). Essential for the elimination and detoxification of drugs, xenobiotics and endogenous compounds (PubMed:7835232). Catalyzes the glucuronidation of endogenous steroid hormones such as androgens (testosterone, androsterone) and estrogens (estradiol, epiestradiol, estriol, catechol estrogens) (PubMed:16595710, PubMed:18719240, PubMed:23288867, PubMed:7835232, PubMed:9295060). Displays glucuronidation activity toward several classes of xenobiotic substrates, including phenolic compounds (eugenol, 4-nitrophenol, 4-hydroxybiphenyl) and phenylpropanoids (naringenin, coumarins) (PubMed:7835232). Catalyzes the glucuronidation of monoterpenoid alcohols such as borneol, menthol and isomenthol, a class of natural compounds used in essential oils (By similarity).</text>
</comment>
<comment type="catalytic activity">
    <reaction evidence="6 7 9 10 12">
        <text>glucuronate acceptor + UDP-alpha-D-glucuronate = acceptor beta-D-glucuronoside + UDP + H(+)</text>
        <dbReference type="Rhea" id="RHEA:21032"/>
        <dbReference type="ChEBI" id="CHEBI:15378"/>
        <dbReference type="ChEBI" id="CHEBI:58052"/>
        <dbReference type="ChEBI" id="CHEBI:58223"/>
        <dbReference type="ChEBI" id="CHEBI:132367"/>
        <dbReference type="ChEBI" id="CHEBI:132368"/>
        <dbReference type="EC" id="2.4.1.17"/>
    </reaction>
    <physiologicalReaction direction="left-to-right" evidence="15 16 18 19 20">
        <dbReference type="Rhea" id="RHEA:21033"/>
    </physiologicalReaction>
</comment>
<comment type="catalytic activity">
    <reaction evidence="7 9">
        <text>17alpha-estradiol + UDP-alpha-D-glucuronate = 17alpha-estradiol 3-O-(beta-D-glucuronate) + UDP + H(+)</text>
        <dbReference type="Rhea" id="RHEA:52868"/>
        <dbReference type="ChEBI" id="CHEBI:15378"/>
        <dbReference type="ChEBI" id="CHEBI:17160"/>
        <dbReference type="ChEBI" id="CHEBI:57529"/>
        <dbReference type="ChEBI" id="CHEBI:58052"/>
        <dbReference type="ChEBI" id="CHEBI:58223"/>
    </reaction>
    <physiologicalReaction direction="left-to-right" evidence="16 18">
        <dbReference type="Rhea" id="RHEA:52869"/>
    </physiologicalReaction>
</comment>
<comment type="catalytic activity">
    <reaction evidence="9">
        <text>16alpha,17alpha-estriol + UDP-alpha-D-glucuronate = 16alpha,17alpha-estriol 3-O-(beta-D-glucuronate) + UDP + H(+)</text>
        <dbReference type="Rhea" id="RHEA:52924"/>
        <dbReference type="ChEBI" id="CHEBI:15378"/>
        <dbReference type="ChEBI" id="CHEBI:42156"/>
        <dbReference type="ChEBI" id="CHEBI:58052"/>
        <dbReference type="ChEBI" id="CHEBI:58223"/>
        <dbReference type="ChEBI" id="CHEBI:136882"/>
    </reaction>
    <physiologicalReaction direction="left-to-right" evidence="18">
        <dbReference type="Rhea" id="RHEA:52925"/>
    </physiologicalReaction>
</comment>
<comment type="catalytic activity">
    <reaction evidence="6">
        <text>17beta-hydroxy-5alpha-androstan-3-one + UDP-alpha-D-glucuronate = 5alpha-dihydrotestosterone 17-O-(beta-D-glucuronate) + UDP + H(+)</text>
        <dbReference type="Rhea" id="RHEA:53000"/>
        <dbReference type="ChEBI" id="CHEBI:15378"/>
        <dbReference type="ChEBI" id="CHEBI:16330"/>
        <dbReference type="ChEBI" id="CHEBI:58052"/>
        <dbReference type="ChEBI" id="CHEBI:58223"/>
        <dbReference type="ChEBI" id="CHEBI:136914"/>
    </reaction>
    <physiologicalReaction direction="left-to-right" evidence="15">
        <dbReference type="Rhea" id="RHEA:53001"/>
    </physiologicalReaction>
</comment>
<comment type="biophysicochemical properties">
    <kinetics>
        <KM evidence="7">26.1 uM for 17alpha-estradiol/epiestradiol (when assaying glucuronidation at position 3)</KM>
        <KM evidence="10">90 uM for UDP-alpha-D-glucuronate (when assaying glucuronidation with eugenol and 4-methylumbelliferone as substrates)</KM>
        <KM evidence="10">15 uM for 4-hydroxy-estrone</KM>
        <KM evidence="10">15 uM for 5alpha-androstane-3alpha,17beta-diol</KM>
        <KM evidence="10">28 uM for naringenin</KM>
        <KM evidence="10">78 uM for 4-methylumbelliferone</KM>
        <KM evidence="10">8 uM for eugenol</KM>
        <KM evidence="10">180 uM for 4-nitrophenol</KM>
        <KM evidence="10">30 uM for 4-hydroxybiphenyl</KM>
        <Vmax evidence="7">350.0 pmol/min/mg enzyme for the formation of 17alpha-estradiol 3-O-(beta-D-glucuronate)</Vmax>
        <Vmax evidence="7">5.0 pmol/min/mg enzyme for the formation of 17beta-estradiol 3-O-(beta-D-glucuronate)</Vmax>
        <Vmax evidence="9">10.1 pmol/min/mg enzyme for the formation of 16beta,17beta-estriol 3-O-(beta-D-glucuronate)</Vmax>
        <Vmax evidence="9">88.1 pmol/min/mg enzyme for the formation of 16alpha,17alpha-estriol 3-O-(beta-D-glucuronate)</Vmax>
        <Vmax evidence="9">9.4 pmol/min/mg enzyme for the formation of 17beta-estradiol 3-O-(beta-D-glucuronate)</Vmax>
        <Vmax evidence="9">349.0 pmol/min/mg enzyme for the formation of 17alpha-estradiol 3-O-(beta-D-glucuronate)</Vmax>
        <Vmax evidence="9">12.3 pmol/min/mg enzyme for the formation of 17alpha-estradiol 17-O-(beta-D-glucuronate)</Vmax>
        <Vmax evidence="6">388.0 pmol/min/mg enzyme for the formation of 5alpha-dihydrotestosterone 17-O-(beta-D-glucuronate)</Vmax>
        <Vmax evidence="10">14.0 pmol/min/mg enzyme for the formation of 4-hydroxy-estrone glucuronide</Vmax>
        <Vmax evidence="10">49.0 pmol/min/mg enzyme for the formation of 5alpha-androstane-3alpha,17beta-diol glucuronide</Vmax>
        <Vmax evidence="10">72.0 pmol/min/mg enzyme for the formation of naringenin glucuronide</Vmax>
        <Vmax evidence="10">5.0 pmol/min/mg enzyme for the formation of 4-methylumbelliferone glucuronide</Vmax>
        <Vmax evidence="10">100.0 pmol/min/mg enzyme for the formation of eugenol glucuronide</Vmax>
        <Vmax evidence="10">23.0 pmol/min/mg enzyme for the formation of 4-nitrophenol glucuronide</Vmax>
        <Vmax evidence="10">55.0 pmol/min/mg enzyme for the formation of 4-hydroxybiphenyl glucuronide</Vmax>
        <text evidence="15 16 18">Some kinetic parameters were assessed using commercial enzymes, which may represent a mix of both active and inactive protein forms, and therefore modify the kinetic values.</text>
    </kinetics>
</comment>
<comment type="subcellular location">
    <subcellularLocation>
        <location evidence="18">Endoplasmic reticulum membrane</location>
        <topology evidence="3">Single-pass membrane protein</topology>
    </subcellularLocation>
</comment>
<comment type="tissue specificity">
    <text evidence="11">Expressed in many tissues. Present in liver, prostate and testis.</text>
</comment>
<comment type="similarity">
    <text evidence="14">Belongs to the UDP-glycosyltransferase family.</text>
</comment>
<protein>
    <recommendedName>
        <fullName evidence="13">UDP-glucuronosyltransferase 2B15</fullName>
        <shortName>UDPGT 2B15</shortName>
        <shortName>UGT2B15</shortName>
        <ecNumber evidence="6 7 9 10 12">2.4.1.17</ecNumber>
    </recommendedName>
    <alternativeName>
        <fullName>HLUG4</fullName>
    </alternativeName>
    <alternativeName>
        <fullName>UDP-glucuronosyltransferase 2B8</fullName>
        <shortName>UDPGT 2B8</shortName>
    </alternativeName>
    <alternativeName>
        <fullName>UDPGTh-3</fullName>
    </alternativeName>
</protein>